<sequence length="92" mass="10919">MVKNSFISIISQEQEEKEENKGSVEFQVFSFTNKIRRLTSHLGLHKKDFSSQRGLRIILGKRQRLLAYLSKKNRVRYKKLIGQLDIREPKTR</sequence>
<gene>
    <name type="primary">rps15-A</name>
</gene>
<gene>
    <name type="primary">rps15-B</name>
</gene>
<dbReference type="EMBL" id="DQ400350">
    <property type="protein sequence ID" value="ABD48542.1"/>
    <property type="molecule type" value="Genomic_DNA"/>
</dbReference>
<dbReference type="EMBL" id="DQ400350">
    <property type="protein sequence ID" value="ABD48553.1"/>
    <property type="molecule type" value="Genomic_DNA"/>
</dbReference>
<dbReference type="SMR" id="A9L9E3"/>
<dbReference type="GO" id="GO:0009507">
    <property type="term" value="C:chloroplast"/>
    <property type="evidence" value="ECO:0007669"/>
    <property type="project" value="UniProtKB-SubCell"/>
</dbReference>
<dbReference type="GO" id="GO:1990904">
    <property type="term" value="C:ribonucleoprotein complex"/>
    <property type="evidence" value="ECO:0007669"/>
    <property type="project" value="UniProtKB-KW"/>
</dbReference>
<dbReference type="GO" id="GO:0005840">
    <property type="term" value="C:ribosome"/>
    <property type="evidence" value="ECO:0007669"/>
    <property type="project" value="UniProtKB-KW"/>
</dbReference>
<dbReference type="GO" id="GO:0003735">
    <property type="term" value="F:structural constituent of ribosome"/>
    <property type="evidence" value="ECO:0007669"/>
    <property type="project" value="InterPro"/>
</dbReference>
<dbReference type="GO" id="GO:0006412">
    <property type="term" value="P:translation"/>
    <property type="evidence" value="ECO:0007669"/>
    <property type="project" value="UniProtKB-UniRule"/>
</dbReference>
<dbReference type="CDD" id="cd00677">
    <property type="entry name" value="S15_NS1_EPRS_RNA-bind"/>
    <property type="match status" value="1"/>
</dbReference>
<dbReference type="Gene3D" id="1.10.287.10">
    <property type="entry name" value="S15/NS1, RNA-binding"/>
    <property type="match status" value="1"/>
</dbReference>
<dbReference type="HAMAP" id="MF_01343_B">
    <property type="entry name" value="Ribosomal_uS15_B"/>
    <property type="match status" value="1"/>
</dbReference>
<dbReference type="InterPro" id="IPR000589">
    <property type="entry name" value="Ribosomal_uS15"/>
</dbReference>
<dbReference type="InterPro" id="IPR005290">
    <property type="entry name" value="Ribosomal_uS15_bac-type"/>
</dbReference>
<dbReference type="InterPro" id="IPR009068">
    <property type="entry name" value="uS15_NS1_RNA-bd_sf"/>
</dbReference>
<dbReference type="NCBIfam" id="TIGR00952">
    <property type="entry name" value="S15_bact"/>
    <property type="match status" value="1"/>
</dbReference>
<dbReference type="PANTHER" id="PTHR23321">
    <property type="entry name" value="RIBOSOMAL PROTEIN S15, BACTERIAL AND ORGANELLAR"/>
    <property type="match status" value="1"/>
</dbReference>
<dbReference type="PANTHER" id="PTHR23321:SF26">
    <property type="entry name" value="SMALL RIBOSOMAL SUBUNIT PROTEIN US15M"/>
    <property type="match status" value="1"/>
</dbReference>
<dbReference type="Pfam" id="PF00312">
    <property type="entry name" value="Ribosomal_S15"/>
    <property type="match status" value="1"/>
</dbReference>
<dbReference type="SMART" id="SM01387">
    <property type="entry name" value="Ribosomal_S15"/>
    <property type="match status" value="1"/>
</dbReference>
<dbReference type="SUPFAM" id="SSF47060">
    <property type="entry name" value="S15/NS1 RNA-binding domain"/>
    <property type="match status" value="1"/>
</dbReference>
<dbReference type="PROSITE" id="PS00362">
    <property type="entry name" value="RIBOSOMAL_S15"/>
    <property type="match status" value="1"/>
</dbReference>
<feature type="chain" id="PRO_0000354263" description="Small ribosomal subunit protein uS15c">
    <location>
        <begin position="1"/>
        <end position="92"/>
    </location>
</feature>
<reference key="1">
    <citation type="journal article" date="2008" name="J. Mol. Evol.">
        <title>Complete sequence of the Duckweed (Lemna minor) chloroplast genome: structural organization and phylogenetic relationships to other angiosperms.</title>
        <authorList>
            <person name="Mardanov A.V."/>
            <person name="Ravin N.V."/>
            <person name="Kuznetsov B.B."/>
            <person name="Samigullin T.H."/>
            <person name="Antonov A.S."/>
            <person name="Kolganova T.V."/>
            <person name="Skyabin K.G."/>
        </authorList>
    </citation>
    <scope>NUCLEOTIDE SEQUENCE [LARGE SCALE GENOMIC DNA]</scope>
</reference>
<geneLocation type="chloroplast"/>
<organism>
    <name type="scientific">Lemna minor</name>
    <name type="common">Common duckweed</name>
    <dbReference type="NCBI Taxonomy" id="4472"/>
    <lineage>
        <taxon>Eukaryota</taxon>
        <taxon>Viridiplantae</taxon>
        <taxon>Streptophyta</taxon>
        <taxon>Embryophyta</taxon>
        <taxon>Tracheophyta</taxon>
        <taxon>Spermatophyta</taxon>
        <taxon>Magnoliopsida</taxon>
        <taxon>Liliopsida</taxon>
        <taxon>Araceae</taxon>
        <taxon>Lemnoideae</taxon>
        <taxon>Lemna</taxon>
    </lineage>
</organism>
<proteinExistence type="inferred from homology"/>
<protein>
    <recommendedName>
        <fullName evidence="2">Small ribosomal subunit protein uS15c</fullName>
    </recommendedName>
    <alternativeName>
        <fullName>30S ribosomal protein S15, chloroplastic</fullName>
    </alternativeName>
</protein>
<accession>A9L9E3</accession>
<keyword id="KW-0150">Chloroplast</keyword>
<keyword id="KW-0934">Plastid</keyword>
<keyword id="KW-0687">Ribonucleoprotein</keyword>
<keyword id="KW-0689">Ribosomal protein</keyword>
<name>RR15_LEMMI</name>
<comment type="subunit">
    <text evidence="1">Part of the 30S ribosomal subunit.</text>
</comment>
<comment type="subcellular location">
    <subcellularLocation>
        <location>Plastid</location>
        <location>Chloroplast</location>
    </subcellularLocation>
</comment>
<comment type="similarity">
    <text evidence="2">Belongs to the universal ribosomal protein uS15 family.</text>
</comment>
<evidence type="ECO:0000250" key="1"/>
<evidence type="ECO:0000305" key="2"/>